<evidence type="ECO:0000250" key="1"/>
<evidence type="ECO:0000250" key="2">
    <source>
        <dbReference type="UniProtKB" id="P14416"/>
    </source>
</evidence>
<evidence type="ECO:0000255" key="3"/>
<evidence type="ECO:0000255" key="4">
    <source>
        <dbReference type="PROSITE-ProRule" id="PRU00521"/>
    </source>
</evidence>
<evidence type="ECO:0000256" key="5">
    <source>
        <dbReference type="SAM" id="MobiDB-lite"/>
    </source>
</evidence>
<protein>
    <recommendedName>
        <fullName>D(2) dopamine receptor B</fullName>
        <shortName>D2R-B</shortName>
    </recommendedName>
    <alternativeName>
        <fullName>D2R 2</fullName>
    </alternativeName>
</protein>
<organism>
    <name type="scientific">Xenopus laevis</name>
    <name type="common">African clawed frog</name>
    <dbReference type="NCBI Taxonomy" id="8355"/>
    <lineage>
        <taxon>Eukaryota</taxon>
        <taxon>Metazoa</taxon>
        <taxon>Chordata</taxon>
        <taxon>Craniata</taxon>
        <taxon>Vertebrata</taxon>
        <taxon>Euteleostomi</taxon>
        <taxon>Amphibia</taxon>
        <taxon>Batrachia</taxon>
        <taxon>Anura</taxon>
        <taxon>Pipoidea</taxon>
        <taxon>Pipidae</taxon>
        <taxon>Xenopodinae</taxon>
        <taxon>Xenopus</taxon>
        <taxon>Xenopus</taxon>
    </lineage>
</organism>
<gene>
    <name type="primary">drd2-b</name>
</gene>
<accession>P34973</accession>
<feature type="chain" id="PRO_0000069394" description="D(2) dopamine receptor B">
    <location>
        <begin position="1" status="less than"/>
        <end position="345"/>
    </location>
</feature>
<feature type="topological domain" description="Extracellular" evidence="1">
    <location>
        <begin position="1" status="less than"/>
        <end position="10"/>
    </location>
</feature>
<feature type="transmembrane region" description="Helical; Name=3" evidence="1">
    <location>
        <begin position="11"/>
        <end position="32"/>
    </location>
</feature>
<feature type="topological domain" description="Cytoplasmic" evidence="1">
    <location>
        <begin position="33"/>
        <end position="53"/>
    </location>
</feature>
<feature type="transmembrane region" description="Helical; Name=4" evidence="1">
    <location>
        <begin position="54"/>
        <end position="74"/>
    </location>
</feature>
<feature type="topological domain" description="Extracellular" evidence="1">
    <location>
        <begin position="75"/>
        <end position="90"/>
    </location>
</feature>
<feature type="transmembrane region" description="Helical; Name=5" evidence="1">
    <location>
        <begin position="91"/>
        <end position="115"/>
    </location>
</feature>
<feature type="topological domain" description="Cytoplasmic" evidence="1">
    <location>
        <begin position="116"/>
        <end position="275"/>
    </location>
</feature>
<feature type="transmembrane region" description="Helical; Name=6" evidence="1">
    <location>
        <begin position="276"/>
        <end position="297"/>
    </location>
</feature>
<feature type="topological domain" description="Extracellular" evidence="1">
    <location>
        <begin position="298"/>
        <end position="311"/>
    </location>
</feature>
<feature type="transmembrane region" description="Helical; Name=7" evidence="1">
    <location>
        <begin position="312"/>
        <end position="333"/>
    </location>
</feature>
<feature type="topological domain" description="Cytoplasmic" evidence="1">
    <location>
        <begin position="334"/>
        <end position="345"/>
    </location>
</feature>
<feature type="region of interest" description="Disordered" evidence="5">
    <location>
        <begin position="166"/>
        <end position="199"/>
    </location>
</feature>
<feature type="compositionally biased region" description="Basic and acidic residues" evidence="5">
    <location>
        <begin position="166"/>
        <end position="177"/>
    </location>
</feature>
<feature type="lipid moiety-binding region" description="S-palmitoyl cysteine" evidence="2">
    <location>
        <position position="345"/>
    </location>
</feature>
<feature type="glycosylation site" description="N-linked (GlcNAc...) asparagine" evidence="3">
    <location>
        <position position="77"/>
    </location>
</feature>
<feature type="disulfide bond" evidence="4">
    <location>
        <begin position="9"/>
        <end position="84"/>
    </location>
</feature>
<feature type="disulfide bond" evidence="4">
    <location>
        <begin position="301"/>
        <end position="303"/>
    </location>
</feature>
<feature type="non-terminal residue">
    <location>
        <position position="1"/>
    </location>
</feature>
<dbReference type="EMBL" id="X72902">
    <property type="protein sequence ID" value="CAA51412.1"/>
    <property type="molecule type" value="mRNA"/>
</dbReference>
<dbReference type="PIR" id="S36959">
    <property type="entry name" value="S36959"/>
</dbReference>
<dbReference type="SMR" id="P34973"/>
<dbReference type="GlyCosmos" id="P34973">
    <property type="glycosylation" value="1 site, No reported glycans"/>
</dbReference>
<dbReference type="AGR" id="Xenbase:XB-GENE-6252634"/>
<dbReference type="Xenbase" id="XB-GENE-6252634">
    <property type="gene designation" value="drd2.S"/>
</dbReference>
<dbReference type="Proteomes" id="UP000186698">
    <property type="component" value="Unplaced"/>
</dbReference>
<dbReference type="GO" id="GO:0098978">
    <property type="term" value="C:glutamatergic synapse"/>
    <property type="evidence" value="ECO:0000318"/>
    <property type="project" value="GO_Central"/>
</dbReference>
<dbReference type="GO" id="GO:0000139">
    <property type="term" value="C:Golgi membrane"/>
    <property type="evidence" value="ECO:0007669"/>
    <property type="project" value="UniProtKB-SubCell"/>
</dbReference>
<dbReference type="GO" id="GO:0005886">
    <property type="term" value="C:plasma membrane"/>
    <property type="evidence" value="ECO:0000318"/>
    <property type="project" value="GO_Central"/>
</dbReference>
<dbReference type="GO" id="GO:0042734">
    <property type="term" value="C:presynaptic membrane"/>
    <property type="evidence" value="ECO:0000318"/>
    <property type="project" value="GO_Central"/>
</dbReference>
<dbReference type="GO" id="GO:0001591">
    <property type="term" value="F:dopamine neurotransmitter receptor activity, coupled via Gi/Go"/>
    <property type="evidence" value="ECO:0000318"/>
    <property type="project" value="GO_Central"/>
</dbReference>
<dbReference type="GO" id="GO:0004930">
    <property type="term" value="F:G protein-coupled receptor activity"/>
    <property type="evidence" value="ECO:0000318"/>
    <property type="project" value="GO_Central"/>
</dbReference>
<dbReference type="GO" id="GO:0007195">
    <property type="term" value="P:adenylate cyclase-inhibiting dopamine receptor signaling pathway"/>
    <property type="evidence" value="ECO:0000318"/>
    <property type="project" value="GO_Central"/>
</dbReference>
<dbReference type="GO" id="GO:0051481">
    <property type="term" value="P:negative regulation of cytosolic calcium ion concentration"/>
    <property type="evidence" value="ECO:0000318"/>
    <property type="project" value="GO_Central"/>
</dbReference>
<dbReference type="GO" id="GO:0051967">
    <property type="term" value="P:negative regulation of synaptic transmission, glutamatergic"/>
    <property type="evidence" value="ECO:0000318"/>
    <property type="project" value="GO_Central"/>
</dbReference>
<dbReference type="GO" id="GO:0060158">
    <property type="term" value="P:phospholipase C-activating dopamine receptor signaling pathway"/>
    <property type="evidence" value="ECO:0000318"/>
    <property type="project" value="GO_Central"/>
</dbReference>
<dbReference type="GO" id="GO:0014059">
    <property type="term" value="P:regulation of dopamine secretion"/>
    <property type="evidence" value="ECO:0000318"/>
    <property type="project" value="GO_Central"/>
</dbReference>
<dbReference type="GO" id="GO:0043266">
    <property type="term" value="P:regulation of potassium ion transport"/>
    <property type="evidence" value="ECO:0000318"/>
    <property type="project" value="GO_Central"/>
</dbReference>
<dbReference type="FunFam" id="1.20.1070.10:FF:000099">
    <property type="entry name" value="D(2) dopamine receptor"/>
    <property type="match status" value="1"/>
</dbReference>
<dbReference type="Gene3D" id="1.20.1070.10">
    <property type="entry name" value="Rhodopsin 7-helix transmembrane proteins"/>
    <property type="match status" value="2"/>
</dbReference>
<dbReference type="InterPro" id="IPR001922">
    <property type="entry name" value="Dopamine_D2_rcpt"/>
</dbReference>
<dbReference type="InterPro" id="IPR000929">
    <property type="entry name" value="Dopamine_rcpt"/>
</dbReference>
<dbReference type="InterPro" id="IPR000276">
    <property type="entry name" value="GPCR_Rhodpsn"/>
</dbReference>
<dbReference type="InterPro" id="IPR017452">
    <property type="entry name" value="GPCR_Rhodpsn_7TM"/>
</dbReference>
<dbReference type="PANTHER" id="PTHR24248">
    <property type="entry name" value="ADRENERGIC RECEPTOR-RELATED G-PROTEIN COUPLED RECEPTOR"/>
    <property type="match status" value="1"/>
</dbReference>
<dbReference type="PANTHER" id="PTHR24248:SF87">
    <property type="entry name" value="D(2) DOPAMINE RECEPTOR"/>
    <property type="match status" value="1"/>
</dbReference>
<dbReference type="Pfam" id="PF00001">
    <property type="entry name" value="7tm_1"/>
    <property type="match status" value="1"/>
</dbReference>
<dbReference type="PRINTS" id="PR00567">
    <property type="entry name" value="DOPAMINED2R"/>
</dbReference>
<dbReference type="PRINTS" id="PR00242">
    <property type="entry name" value="DOPAMINER"/>
</dbReference>
<dbReference type="PRINTS" id="PR00237">
    <property type="entry name" value="GPCRRHODOPSN"/>
</dbReference>
<dbReference type="SMART" id="SM01381">
    <property type="entry name" value="7TM_GPCR_Srsx"/>
    <property type="match status" value="1"/>
</dbReference>
<dbReference type="SUPFAM" id="SSF81321">
    <property type="entry name" value="Family A G protein-coupled receptor-like"/>
    <property type="match status" value="1"/>
</dbReference>
<dbReference type="PROSITE" id="PS00237">
    <property type="entry name" value="G_PROTEIN_RECEP_F1_1"/>
    <property type="match status" value="1"/>
</dbReference>
<dbReference type="PROSITE" id="PS50262">
    <property type="entry name" value="G_PROTEIN_RECEP_F1_2"/>
    <property type="match status" value="1"/>
</dbReference>
<reference key="1">
    <citation type="journal article" date="1993" name="Eur. J. Biochem.">
        <title>Expression of the Xenopus D2 dopamine receptor. Tissue-specific regulation and two transcriptionally active genes but no evidence for alternative splicing.</title>
        <authorList>
            <person name="Martens G.J.M."/>
            <person name="Groenen P.M.A."/>
            <person name="Groeneveld D."/>
            <person name="van Riel M.C.H.M."/>
        </authorList>
    </citation>
    <scope>NUCLEOTIDE SEQUENCE [MRNA]</scope>
    <source>
        <tissue>Brain</tissue>
    </source>
</reference>
<proteinExistence type="evidence at transcript level"/>
<name>DRD2B_XENLA</name>
<comment type="function">
    <text>This is one of the five types (D1 to D5) of receptors for dopamine. The activity of this receptor is mediated by G proteins which inhibits adenylyl cyclase. In Xenopus D2R is involved in the regulation of the melanotrope cells of the intermediate pituitary during background adaptation of the animal.</text>
</comment>
<comment type="subcellular location">
    <subcellularLocation>
        <location evidence="2">Cell membrane</location>
        <topology evidence="3">Multi-pass membrane protein</topology>
    </subcellularLocation>
    <subcellularLocation>
        <location evidence="2">Golgi apparatus membrane</location>
        <topology evidence="3">Multi-pass membrane protein</topology>
    </subcellularLocation>
</comment>
<comment type="tissue specificity">
    <text>Brain; pituitary.</text>
</comment>
<comment type="PTM">
    <text evidence="2">Palmitoylated. Palmitoylation is probably required for proper localization to the plasma membrane and stability of the receptor.</text>
</comment>
<comment type="similarity">
    <text evidence="4">Belongs to the G-protein coupled receptor 1 family.</text>
</comment>
<sequence>EWRFSRIHCDIFVTLDVMMCTASILNLCAISIDRYTAVAMPMLYNTRYSSKRRVTVMISVVWVLSFAISCPLLFGLNNTASTVCIIDNPAFVIYSSIVSFYVPFIVTLLVYVQIYIVLRKRRKRVNTKRNSHGVGVDAHKDKCTHPEDVKLCAVFVKSNGSFPAEKKKVEAGNHPEDMEMEMMSSTSPPEKTKHKSASPEHQLAVPATSNQCNNVNLPTPVNSPYKAENNGHSKDSTQPAKVFEIQSMPNGKTRTSIKTMSKRKISQHKEKKATQMLAIVLGVFIICWLPFFITHILNMHCNCNIPQALYSAFTWLGYVNSAVNPIIYTTFNVEFRKAFIKILHC</sequence>
<keyword id="KW-1003">Cell membrane</keyword>
<keyword id="KW-1015">Disulfide bond</keyword>
<keyword id="KW-0297">G-protein coupled receptor</keyword>
<keyword id="KW-0325">Glycoprotein</keyword>
<keyword id="KW-0333">Golgi apparatus</keyword>
<keyword id="KW-0449">Lipoprotein</keyword>
<keyword id="KW-0472">Membrane</keyword>
<keyword id="KW-0564">Palmitate</keyword>
<keyword id="KW-0675">Receptor</keyword>
<keyword id="KW-1185">Reference proteome</keyword>
<keyword id="KW-0807">Transducer</keyword>
<keyword id="KW-0812">Transmembrane</keyword>
<keyword id="KW-1133">Transmembrane helix</keyword>